<organism>
    <name type="scientific">Glycine max</name>
    <name type="common">Soybean</name>
    <name type="synonym">Glycine hispida</name>
    <dbReference type="NCBI Taxonomy" id="3847"/>
    <lineage>
        <taxon>Eukaryota</taxon>
        <taxon>Viridiplantae</taxon>
        <taxon>Streptophyta</taxon>
        <taxon>Embryophyta</taxon>
        <taxon>Tracheophyta</taxon>
        <taxon>Spermatophyta</taxon>
        <taxon>Magnoliopsida</taxon>
        <taxon>eudicotyledons</taxon>
        <taxon>Gunneridae</taxon>
        <taxon>Pentapetalae</taxon>
        <taxon>rosids</taxon>
        <taxon>fabids</taxon>
        <taxon>Fabales</taxon>
        <taxon>Fabaceae</taxon>
        <taxon>Papilionoideae</taxon>
        <taxon>50 kb inversion clade</taxon>
        <taxon>NPAAA clade</taxon>
        <taxon>indigoferoid/millettioid clade</taxon>
        <taxon>Phaseoleae</taxon>
        <taxon>Glycine</taxon>
        <taxon>Glycine subgen. Soja</taxon>
    </lineage>
</organism>
<reference key="1">
    <citation type="online journal article" date="1998" name="Plant Gene Register">
        <title>Nucleotide sequence of a cDNA encoding a soybean seedling axes arginase.</title>
        <authorList>
            <person name="Goldraij A."/>
            <person name="Coello P."/>
            <person name="Polacco J.C."/>
        </authorList>
        <locator>PGR98-016</locator>
    </citation>
    <scope>NUCLEOTIDE SEQUENCE [MRNA]</scope>
    <source>
        <strain>cv. Williams 82</strain>
    </source>
</reference>
<keyword id="KW-0056">Arginine metabolism</keyword>
<keyword id="KW-0378">Hydrolase</keyword>
<keyword id="KW-0464">Manganese</keyword>
<keyword id="KW-0479">Metal-binding</keyword>
<keyword id="KW-1185">Reference proteome</keyword>
<accession>O49046</accession>
<dbReference type="EC" id="3.5.3.1" evidence="1"/>
<dbReference type="EMBL" id="AF035671">
    <property type="protein sequence ID" value="AAC04613.1"/>
    <property type="molecule type" value="mRNA"/>
</dbReference>
<dbReference type="PIR" id="T06222">
    <property type="entry name" value="T06222"/>
</dbReference>
<dbReference type="RefSeq" id="NP_001237121.1">
    <property type="nucleotide sequence ID" value="NM_001250192.1"/>
</dbReference>
<dbReference type="SMR" id="O49046"/>
<dbReference type="STRING" id="3847.O49046"/>
<dbReference type="PaxDb" id="3847-GLYMA03G03270.1"/>
<dbReference type="GeneID" id="547994"/>
<dbReference type="KEGG" id="gmx:547994"/>
<dbReference type="eggNOG" id="KOG2964">
    <property type="taxonomic scope" value="Eukaryota"/>
</dbReference>
<dbReference type="InParanoid" id="O49046"/>
<dbReference type="UniPathway" id="UPA00158">
    <property type="reaction ID" value="UER00270"/>
</dbReference>
<dbReference type="Proteomes" id="UP000008827">
    <property type="component" value="Unplaced"/>
</dbReference>
<dbReference type="GO" id="GO:0008783">
    <property type="term" value="F:agmatinase activity"/>
    <property type="evidence" value="ECO:0000318"/>
    <property type="project" value="GO_Central"/>
</dbReference>
<dbReference type="GO" id="GO:0004053">
    <property type="term" value="F:arginase activity"/>
    <property type="evidence" value="ECO:0007669"/>
    <property type="project" value="UniProtKB-EC"/>
</dbReference>
<dbReference type="GO" id="GO:0046872">
    <property type="term" value="F:metal ion binding"/>
    <property type="evidence" value="ECO:0007669"/>
    <property type="project" value="UniProtKB-KW"/>
</dbReference>
<dbReference type="GO" id="GO:0033389">
    <property type="term" value="P:putrescine biosynthetic process from arginine, via agmatine"/>
    <property type="evidence" value="ECO:0000318"/>
    <property type="project" value="GO_Central"/>
</dbReference>
<dbReference type="GO" id="GO:0000050">
    <property type="term" value="P:urea cycle"/>
    <property type="evidence" value="ECO:0007669"/>
    <property type="project" value="UniProtKB-UniPathway"/>
</dbReference>
<dbReference type="CDD" id="cd11593">
    <property type="entry name" value="Agmatinase-like_2"/>
    <property type="match status" value="1"/>
</dbReference>
<dbReference type="FunFam" id="3.40.800.10:FF:000007">
    <property type="entry name" value="Arginase 1, mitochondrial"/>
    <property type="match status" value="1"/>
</dbReference>
<dbReference type="Gene3D" id="3.40.800.10">
    <property type="entry name" value="Ureohydrolase domain"/>
    <property type="match status" value="1"/>
</dbReference>
<dbReference type="InterPro" id="IPR006035">
    <property type="entry name" value="Ureohydrolase"/>
</dbReference>
<dbReference type="InterPro" id="IPR023696">
    <property type="entry name" value="Ureohydrolase_dom_sf"/>
</dbReference>
<dbReference type="PANTHER" id="PTHR11358:SF32">
    <property type="entry name" value="ARGINASE 2, CHLOROPLASTIC_MITOCHONDRIAL"/>
    <property type="match status" value="1"/>
</dbReference>
<dbReference type="PANTHER" id="PTHR11358">
    <property type="entry name" value="ARGINASE/AGMATINASE"/>
    <property type="match status" value="1"/>
</dbReference>
<dbReference type="Pfam" id="PF00491">
    <property type="entry name" value="Arginase"/>
    <property type="match status" value="1"/>
</dbReference>
<dbReference type="SUPFAM" id="SSF52768">
    <property type="entry name" value="Arginase/deacetylase"/>
    <property type="match status" value="1"/>
</dbReference>
<dbReference type="PROSITE" id="PS51409">
    <property type="entry name" value="ARGINASE_2"/>
    <property type="match status" value="1"/>
</dbReference>
<proteinExistence type="evidence at transcript level"/>
<comment type="catalytic activity">
    <reaction evidence="1">
        <text>L-arginine + H2O = urea + L-ornithine</text>
        <dbReference type="Rhea" id="RHEA:20569"/>
        <dbReference type="ChEBI" id="CHEBI:15377"/>
        <dbReference type="ChEBI" id="CHEBI:16199"/>
        <dbReference type="ChEBI" id="CHEBI:32682"/>
        <dbReference type="ChEBI" id="CHEBI:46911"/>
        <dbReference type="EC" id="3.5.3.1"/>
    </reaction>
</comment>
<comment type="cofactor">
    <cofactor evidence="4">
        <name>Mn(2+)</name>
        <dbReference type="ChEBI" id="CHEBI:29035"/>
    </cofactor>
    <text evidence="4">Binds 2 manganese ions per subunit.</text>
</comment>
<comment type="pathway">
    <text evidence="1">Nitrogen metabolism; urea cycle; L-ornithine and urea from L-arginine: step 1/1.</text>
</comment>
<comment type="similarity">
    <text evidence="4">Belongs to the arginase family.</text>
</comment>
<feature type="chain" id="PRO_0000173705" description="Arginase">
    <location>
        <begin position="1"/>
        <end position="350"/>
    </location>
</feature>
<feature type="binding site" evidence="4">
    <location>
        <position position="193"/>
    </location>
    <ligand>
        <name>Mn(2+)</name>
        <dbReference type="ChEBI" id="CHEBI:29035"/>
        <label>1</label>
    </ligand>
</feature>
<feature type="binding site" evidence="4">
    <location>
        <position position="193"/>
    </location>
    <ligand>
        <name>Mn(2+)</name>
        <dbReference type="ChEBI" id="CHEBI:29035"/>
        <label>2</label>
    </ligand>
</feature>
<feature type="binding site" evidence="2">
    <location>
        <begin position="195"/>
        <end position="199"/>
    </location>
    <ligand>
        <name>substrate</name>
    </ligand>
</feature>
<feature type="binding site" evidence="4">
    <location>
        <position position="195"/>
    </location>
    <ligand>
        <name>Mn(2+)</name>
        <dbReference type="ChEBI" id="CHEBI:29035"/>
        <label>2</label>
    </ligand>
</feature>
<feature type="binding site" evidence="4">
    <location>
        <position position="197"/>
    </location>
    <ligand>
        <name>Mn(2+)</name>
        <dbReference type="ChEBI" id="CHEBI:29035"/>
        <label>1</label>
    </ligand>
</feature>
<feature type="binding site" evidence="2">
    <location>
        <begin position="203"/>
        <end position="205"/>
    </location>
    <ligand>
        <name>substrate</name>
    </ligand>
</feature>
<feature type="binding site" evidence="3">
    <location>
        <position position="234"/>
    </location>
    <ligand>
        <name>substrate</name>
    </ligand>
</feature>
<feature type="binding site" evidence="4">
    <location>
        <position position="278"/>
    </location>
    <ligand>
        <name>Mn(2+)</name>
        <dbReference type="ChEBI" id="CHEBI:29035"/>
        <label>1</label>
    </ligand>
</feature>
<feature type="binding site" evidence="4">
    <location>
        <position position="278"/>
    </location>
    <ligand>
        <name>Mn(2+)</name>
        <dbReference type="ChEBI" id="CHEBI:29035"/>
        <label>2</label>
    </ligand>
</feature>
<feature type="binding site" evidence="4">
    <location>
        <position position="280"/>
    </location>
    <ligand>
        <name>Mn(2+)</name>
        <dbReference type="ChEBI" id="CHEBI:29035"/>
        <label>2</label>
    </ligand>
</feature>
<feature type="binding site" evidence="2">
    <location>
        <position position="321"/>
    </location>
    <ligand>
        <name>substrate</name>
    </ligand>
</feature>
<protein>
    <recommendedName>
        <fullName>Arginase</fullName>
        <ecNumber evidence="1">3.5.3.1</ecNumber>
    </recommendedName>
</protein>
<sequence>MSFLRSFARNKDISKVGRRGIHCMQKLCAEKISPDSLEKAQNRVIDAALTLVRENTGLRKNLCHSLGGAVATSTLLGVPLGHNSSFLEGPAFAPPFIREGIWCGSANSTTEEGKDLKDLRIMVDVGDIPIQEMRDCGIGDERLMKVVSDSVKLVMEEDPLRPLILGGDPSISYPVVRAISEKLGGPVDVLHFDAHPDLYDEFEGNYYSHASSFARIMEGGYARRLLQVGIRSINKEGREQAKKFGVEQFEMRHFSKDRPFLENLNLGEGAKGVYISIDVDCLDPGYAVGVSHYESGGLSFRDVMNMLQNLKGDIVGGDVVEYNPQREPPDRMTAMVAAKFVRELAAKMSK</sequence>
<gene>
    <name type="primary">AG1</name>
</gene>
<name>ARGI_SOYBN</name>
<evidence type="ECO:0000250" key="1">
    <source>
        <dbReference type="UniProtKB" id="P05089"/>
    </source>
</evidence>
<evidence type="ECO:0000250" key="2">
    <source>
        <dbReference type="UniProtKB" id="P53608"/>
    </source>
</evidence>
<evidence type="ECO:0000255" key="3"/>
<evidence type="ECO:0000255" key="4">
    <source>
        <dbReference type="PROSITE-ProRule" id="PRU00742"/>
    </source>
</evidence>